<name>COAX_DICNV</name>
<proteinExistence type="inferred from homology"/>
<evidence type="ECO:0000255" key="1">
    <source>
        <dbReference type="HAMAP-Rule" id="MF_01274"/>
    </source>
</evidence>
<comment type="function">
    <text evidence="1">Catalyzes the phosphorylation of pantothenate (Pan), the first step in CoA biosynthesis.</text>
</comment>
<comment type="catalytic activity">
    <reaction evidence="1">
        <text>(R)-pantothenate + ATP = (R)-4'-phosphopantothenate + ADP + H(+)</text>
        <dbReference type="Rhea" id="RHEA:16373"/>
        <dbReference type="ChEBI" id="CHEBI:10986"/>
        <dbReference type="ChEBI" id="CHEBI:15378"/>
        <dbReference type="ChEBI" id="CHEBI:29032"/>
        <dbReference type="ChEBI" id="CHEBI:30616"/>
        <dbReference type="ChEBI" id="CHEBI:456216"/>
        <dbReference type="EC" id="2.7.1.33"/>
    </reaction>
</comment>
<comment type="cofactor">
    <cofactor evidence="1">
        <name>NH4(+)</name>
        <dbReference type="ChEBI" id="CHEBI:28938"/>
    </cofactor>
    <cofactor evidence="1">
        <name>K(+)</name>
        <dbReference type="ChEBI" id="CHEBI:29103"/>
    </cofactor>
    <text evidence="1">A monovalent cation. Ammonium or potassium.</text>
</comment>
<comment type="pathway">
    <text evidence="1">Cofactor biosynthesis; coenzyme A biosynthesis; CoA from (R)-pantothenate: step 1/5.</text>
</comment>
<comment type="subunit">
    <text evidence="1">Homodimer.</text>
</comment>
<comment type="subcellular location">
    <subcellularLocation>
        <location evidence="1">Cytoplasm</location>
    </subcellularLocation>
</comment>
<comment type="similarity">
    <text evidence="1">Belongs to the type III pantothenate kinase family.</text>
</comment>
<protein>
    <recommendedName>
        <fullName evidence="1">Type III pantothenate kinase</fullName>
        <ecNumber evidence="1">2.7.1.33</ecNumber>
    </recommendedName>
    <alternativeName>
        <fullName evidence="1">PanK-III</fullName>
    </alternativeName>
    <alternativeName>
        <fullName evidence="1">Pantothenic acid kinase</fullName>
    </alternativeName>
</protein>
<gene>
    <name evidence="1" type="primary">coaX</name>
    <name type="ordered locus">DNO_0542</name>
</gene>
<reference key="1">
    <citation type="journal article" date="2007" name="Nat. Biotechnol.">
        <title>Genome sequence and identification of candidate vaccine antigens from the animal pathogen Dichelobacter nodosus.</title>
        <authorList>
            <person name="Myers G.S.A."/>
            <person name="Parker D."/>
            <person name="Al-Hasani K."/>
            <person name="Kennan R.M."/>
            <person name="Seemann T."/>
            <person name="Ren Q."/>
            <person name="Badger J.H."/>
            <person name="Selengut J.D."/>
            <person name="Deboy R.T."/>
            <person name="Tettelin H."/>
            <person name="Boyce J.D."/>
            <person name="McCarl V.P."/>
            <person name="Han X."/>
            <person name="Nelson W.C."/>
            <person name="Madupu R."/>
            <person name="Mohamoud Y."/>
            <person name="Holley T."/>
            <person name="Fedorova N."/>
            <person name="Khouri H."/>
            <person name="Bottomley S.P."/>
            <person name="Whittington R.J."/>
            <person name="Adler B."/>
            <person name="Songer J.G."/>
            <person name="Rood J.I."/>
            <person name="Paulsen I.T."/>
        </authorList>
    </citation>
    <scope>NUCLEOTIDE SEQUENCE [LARGE SCALE GENOMIC DNA]</scope>
    <source>
        <strain>VCS1703A</strain>
    </source>
</reference>
<sequence>MYLLIDVGNSRIKWLYGNKVPSTIEAVSYKQDWQMKLIRAWHLLPEPEAIALSSVNKAEITTTIEEIVRQLWHKTVKIFVSQKQTNHTLTVVYQKPEKLGSDRYLAMLGARSLCHDPLCVVGCGTAITLDAVDGDGRHLGGFILPGMRLAENALLQNTQKLVPMRWTPHLLGNDTASCISAGIHHALPAGVDHIIDELEGQCGYYFKRFAFGGDAQILFGNRPTYRIEPDLIFGGMFAHLSPPKQV</sequence>
<feature type="chain" id="PRO_1000054375" description="Type III pantothenate kinase">
    <location>
        <begin position="1"/>
        <end position="246"/>
    </location>
</feature>
<feature type="active site" description="Proton acceptor" evidence="1">
    <location>
        <position position="102"/>
    </location>
</feature>
<feature type="binding site" evidence="1">
    <location>
        <begin position="6"/>
        <end position="13"/>
    </location>
    <ligand>
        <name>ATP</name>
        <dbReference type="ChEBI" id="CHEBI:30616"/>
    </ligand>
</feature>
<feature type="binding site" evidence="1">
    <location>
        <position position="93"/>
    </location>
    <ligand>
        <name>substrate</name>
    </ligand>
</feature>
<feature type="binding site" evidence="1">
    <location>
        <begin position="100"/>
        <end position="103"/>
    </location>
    <ligand>
        <name>substrate</name>
    </ligand>
</feature>
<feature type="binding site" evidence="1">
    <location>
        <position position="125"/>
    </location>
    <ligand>
        <name>ATP</name>
        <dbReference type="ChEBI" id="CHEBI:30616"/>
    </ligand>
</feature>
<feature type="binding site" evidence="1">
    <location>
        <position position="175"/>
    </location>
    <ligand>
        <name>substrate</name>
    </ligand>
</feature>
<dbReference type="EC" id="2.7.1.33" evidence="1"/>
<dbReference type="EMBL" id="CP000513">
    <property type="protein sequence ID" value="ABQ13636.1"/>
    <property type="molecule type" value="Genomic_DNA"/>
</dbReference>
<dbReference type="RefSeq" id="WP_012030876.1">
    <property type="nucleotide sequence ID" value="NC_009446.1"/>
</dbReference>
<dbReference type="SMR" id="A5EVK4"/>
<dbReference type="STRING" id="246195.DNO_0542"/>
<dbReference type="KEGG" id="dno:DNO_0542"/>
<dbReference type="eggNOG" id="COG1521">
    <property type="taxonomic scope" value="Bacteria"/>
</dbReference>
<dbReference type="HOGENOM" id="CLU_066627_0_0_6"/>
<dbReference type="OrthoDB" id="9781305at2"/>
<dbReference type="UniPathway" id="UPA00241">
    <property type="reaction ID" value="UER00352"/>
</dbReference>
<dbReference type="Proteomes" id="UP000000248">
    <property type="component" value="Chromosome"/>
</dbReference>
<dbReference type="GO" id="GO:0005737">
    <property type="term" value="C:cytoplasm"/>
    <property type="evidence" value="ECO:0007669"/>
    <property type="project" value="UniProtKB-SubCell"/>
</dbReference>
<dbReference type="GO" id="GO:0005524">
    <property type="term" value="F:ATP binding"/>
    <property type="evidence" value="ECO:0007669"/>
    <property type="project" value="UniProtKB-UniRule"/>
</dbReference>
<dbReference type="GO" id="GO:0004594">
    <property type="term" value="F:pantothenate kinase activity"/>
    <property type="evidence" value="ECO:0007669"/>
    <property type="project" value="UniProtKB-UniRule"/>
</dbReference>
<dbReference type="GO" id="GO:0015937">
    <property type="term" value="P:coenzyme A biosynthetic process"/>
    <property type="evidence" value="ECO:0007669"/>
    <property type="project" value="UniProtKB-UniRule"/>
</dbReference>
<dbReference type="CDD" id="cd24015">
    <property type="entry name" value="ASKHA_NBD_PanK-III"/>
    <property type="match status" value="1"/>
</dbReference>
<dbReference type="Gene3D" id="3.30.420.40">
    <property type="match status" value="2"/>
</dbReference>
<dbReference type="HAMAP" id="MF_01274">
    <property type="entry name" value="Pantothen_kinase_3"/>
    <property type="match status" value="1"/>
</dbReference>
<dbReference type="InterPro" id="IPR043129">
    <property type="entry name" value="ATPase_NBD"/>
</dbReference>
<dbReference type="InterPro" id="IPR004619">
    <property type="entry name" value="Type_III_PanK"/>
</dbReference>
<dbReference type="NCBIfam" id="TIGR00671">
    <property type="entry name" value="baf"/>
    <property type="match status" value="1"/>
</dbReference>
<dbReference type="PANTHER" id="PTHR34265">
    <property type="entry name" value="TYPE III PANTOTHENATE KINASE"/>
    <property type="match status" value="1"/>
</dbReference>
<dbReference type="PANTHER" id="PTHR34265:SF1">
    <property type="entry name" value="TYPE III PANTOTHENATE KINASE"/>
    <property type="match status" value="1"/>
</dbReference>
<dbReference type="Pfam" id="PF03309">
    <property type="entry name" value="Pan_kinase"/>
    <property type="match status" value="1"/>
</dbReference>
<dbReference type="SUPFAM" id="SSF53067">
    <property type="entry name" value="Actin-like ATPase domain"/>
    <property type="match status" value="2"/>
</dbReference>
<keyword id="KW-0067">ATP-binding</keyword>
<keyword id="KW-0173">Coenzyme A biosynthesis</keyword>
<keyword id="KW-0963">Cytoplasm</keyword>
<keyword id="KW-0418">Kinase</keyword>
<keyword id="KW-0547">Nucleotide-binding</keyword>
<keyword id="KW-0630">Potassium</keyword>
<keyword id="KW-1185">Reference proteome</keyword>
<keyword id="KW-0808">Transferase</keyword>
<organism>
    <name type="scientific">Dichelobacter nodosus (strain VCS1703A)</name>
    <dbReference type="NCBI Taxonomy" id="246195"/>
    <lineage>
        <taxon>Bacteria</taxon>
        <taxon>Pseudomonadati</taxon>
        <taxon>Pseudomonadota</taxon>
        <taxon>Gammaproteobacteria</taxon>
        <taxon>Cardiobacteriales</taxon>
        <taxon>Cardiobacteriaceae</taxon>
        <taxon>Dichelobacter</taxon>
    </lineage>
</organism>
<accession>A5EVK4</accession>